<gene>
    <name evidence="4" type="primary">tcdE</name>
    <name evidence="3" type="synonym">utxA</name>
</gene>
<proteinExistence type="evidence at protein level"/>
<organism>
    <name type="scientific">Clostridioides difficile</name>
    <name type="common">Peptoclostridium difficile</name>
    <dbReference type="NCBI Taxonomy" id="1496"/>
    <lineage>
        <taxon>Bacteria</taxon>
        <taxon>Bacillati</taxon>
        <taxon>Bacillota</taxon>
        <taxon>Clostridia</taxon>
        <taxon>Peptostreptococcales</taxon>
        <taxon>Peptostreptococcaceae</taxon>
        <taxon>Clostridioides</taxon>
    </lineage>
</organism>
<name>TCDE_CLODI</name>
<protein>
    <recommendedName>
        <fullName>Holin-like protein TcdE</fullName>
    </recommendedName>
</protein>
<feature type="chain" id="PRO_0000022643" description="Holin-like protein TcdE">
    <location>
        <begin position="1"/>
        <end position="166"/>
    </location>
</feature>
<feature type="transmembrane region" description="Helical" evidence="1">
    <location>
        <begin position="15"/>
        <end position="35"/>
    </location>
</feature>
<feature type="transmembrane region" description="Helical" evidence="1">
    <location>
        <begin position="36"/>
        <end position="56"/>
    </location>
</feature>
<feature type="transmembrane region" description="Helical" evidence="1">
    <location>
        <begin position="77"/>
        <end position="97"/>
    </location>
</feature>
<feature type="transmembrane region" description="Helical" evidence="1">
    <location>
        <begin position="111"/>
        <end position="131"/>
    </location>
</feature>
<feature type="splice variant" id="VSP_018824" description="In isoform 2." evidence="5">
    <location>
        <begin position="1"/>
        <end position="26"/>
    </location>
</feature>
<feature type="splice variant" id="VSP_060769" description="In isoform 3." evidence="5">
    <location>
        <begin position="1"/>
        <end position="24"/>
    </location>
</feature>
<evidence type="ECO:0000255" key="1"/>
<evidence type="ECO:0000269" key="2">
    <source>
    </source>
</evidence>
<evidence type="ECO:0000303" key="3">
    <source>
    </source>
</evidence>
<evidence type="ECO:0000303" key="4">
    <source>
    </source>
</evidence>
<evidence type="ECO:0000305" key="5"/>
<evidence type="ECO:0000305" key="6">
    <source>
    </source>
</evidence>
<comment type="function">
    <molecule>Isoform 1</molecule>
    <text evidence="2">Holin-like protein required for secretion of toxins A and B (TcdA and TcdB) (PubMed:22685398). Facilitates the release of toxins to the extracellular environment without causing the bacterial cell lysis (PubMed:22685398).</text>
</comment>
<comment type="function">
    <molecule>Isoform 2</molecule>
    <text evidence="6">Has weak activity, suggesting that it may act as a antiholin when multiple forms are produced.</text>
</comment>
<comment type="function">
    <molecule>Isoform 3</molecule>
    <text evidence="6">Has weak activity, suggesting that it may act as a antiholin when multiple forms are produced.</text>
</comment>
<comment type="subunit">
    <text evidence="2">Homomultimer.</text>
</comment>
<comment type="subcellular location">
    <subcellularLocation>
        <location evidence="2">Cell membrane</location>
        <topology evidence="1">Multi-pass membrane protein</topology>
    </subcellularLocation>
</comment>
<comment type="alternative products">
    <event type="alternative initiation"/>
    <isoform>
        <id>P16153-1</id>
        <name>1</name>
        <name evidence="3">Long</name>
        <sequence type="displayed"/>
    </isoform>
    <isoform>
        <id>P16153-2</id>
        <name>2</name>
        <name evidence="3">Short</name>
        <sequence type="described" ref="VSP_018824"/>
    </isoform>
    <isoform>
        <id>P16153-3</id>
        <name>3</name>
        <sequence type="described" ref="VSP_060769"/>
    </isoform>
</comment>
<comment type="disruption phenotype">
    <text evidence="2">Cells grow normally but accumulate a strongly reduced amount of toxins TcdA and TcdB in the medium.</text>
</comment>
<comment type="similarity">
    <text evidence="5">Belongs to the bacteriophage holin family.</text>
</comment>
<reference key="1">
    <citation type="journal article" date="1992" name="Mol. Gen. Genet.">
        <title>Comparative sequence analysis of the Clostridium difficile toxins A and B.</title>
        <authorList>
            <person name="von Eichel-Streiber C."/>
            <person name="Laufenberg-Feldmann R."/>
            <person name="Sartingen S."/>
            <person name="Schulze J."/>
            <person name="Sauerborn M."/>
        </authorList>
    </citation>
    <scope>NUCLEOTIDE SEQUENCE [GENOMIC DNA]</scope>
    <source>
        <strain>ATCC 4325 / VPI 10463</strain>
    </source>
</reference>
<reference key="2">
    <citation type="journal article" date="1990" name="Infect. Immun.">
        <title>Molecular characterization of the Clostridium difficile toxin A gene.</title>
        <authorList>
            <person name="Dove C.H."/>
            <person name="Wang S.-Z."/>
            <person name="Price S.B."/>
            <person name="Phelps C.J."/>
            <person name="Lyerly D.M."/>
            <person name="Wilkins T.D."/>
            <person name="Johnson J.L."/>
        </authorList>
    </citation>
    <scope>NUCLEOTIDE SEQUENCE [GENOMIC DNA]</scope>
    <source>
        <strain>ATCC 4325 / VPI 10463</strain>
    </source>
</reference>
<reference key="3">
    <citation type="submission" date="1997-01" db="EMBL/GenBank/DDBJ databases">
        <authorList>
            <person name="von Eichel-Streiber C."/>
        </authorList>
    </citation>
    <scope>NUCLEOTIDE SEQUENCE [GENOMIC DNA]</scope>
    <source>
        <strain>ATCC 4325 / VPI 10463</strain>
    </source>
</reference>
<reference key="4">
    <citation type="journal article" date="1990" name="Nucleic Acids Res.">
        <title>Nucleotide sequence of Clostridium difficile toxin A.</title>
        <authorList>
            <person name="Sauerborn M."/>
            <person name="von Eichel-Streiber C."/>
        </authorList>
    </citation>
    <scope>NUCLEOTIDE SEQUENCE [GENOMIC DNA] OF 25-166</scope>
    <source>
        <strain>ATCC 4325 / VPI 10463</strain>
    </source>
</reference>
<reference key="5">
    <citation type="journal article" date="2012" name="PLoS Pathog.">
        <title>Secretion of Clostridium difficile toxins A and B requires the holin-like protein TcdE.</title>
        <authorList>
            <person name="Govind R."/>
            <person name="Dupuy B."/>
        </authorList>
    </citation>
    <scope>FUNCTION</scope>
    <scope>ALTERNATIVE INITIATION (ISOFORMS 1; 2 AND 3)</scope>
    <scope>SUBUNIT</scope>
    <scope>SUBCELLULAR LOCATION</scope>
    <scope>DISRUPTION PHENOTYPE</scope>
</reference>
<accession>P16153</accession>
<keyword id="KW-0024">Alternative initiation</keyword>
<keyword id="KW-1003">Cell membrane</keyword>
<keyword id="KW-0472">Membrane</keyword>
<keyword id="KW-0653">Protein transport</keyword>
<keyword id="KW-0812">Transmembrane</keyword>
<keyword id="KW-1133">Transmembrane helix</keyword>
<keyword id="KW-0813">Transport</keyword>
<dbReference type="EMBL" id="X60984">
    <property type="protein sequence ID" value="CAA43300.1"/>
    <property type="molecule type" value="Genomic_DNA"/>
</dbReference>
<dbReference type="EMBL" id="X60984">
    <property type="protein sequence ID" value="CAA43301.1"/>
    <property type="molecule type" value="Genomic_DNA"/>
</dbReference>
<dbReference type="EMBL" id="M30308">
    <property type="protein sequence ID" value="AAA83532.1"/>
    <property type="molecule type" value="Genomic_DNA"/>
</dbReference>
<dbReference type="EMBL" id="M30308">
    <property type="protein sequence ID" value="AAA83533.1"/>
    <property type="molecule type" value="Genomic_DNA"/>
</dbReference>
<dbReference type="EMBL" id="X92982">
    <property type="protein sequence ID" value="CAA63563.1"/>
    <property type="molecule type" value="Genomic_DNA"/>
</dbReference>
<dbReference type="EMBL" id="X51797">
    <property type="protein sequence ID" value="CAA36093.1"/>
    <property type="molecule type" value="Genomic_DNA"/>
</dbReference>
<dbReference type="PIR" id="B37052">
    <property type="entry name" value="B37052"/>
</dbReference>
<dbReference type="RefSeq" id="WP_003434540.1">
    <property type="nucleotide sequence ID" value="NZ_VINH01000002.1"/>
</dbReference>
<dbReference type="RefSeq" id="WP_018112585.1">
    <molecule id="P16153-3"/>
    <property type="nucleotide sequence ID" value="NZ_JBBBKL010000022.1"/>
</dbReference>
<dbReference type="SMR" id="P16153"/>
<dbReference type="TCDB" id="1.E.19.3.1">
    <property type="family name" value="the clostridium difficile tcde holin (tcde holin) family"/>
</dbReference>
<dbReference type="GeneID" id="66353158"/>
<dbReference type="GO" id="GO:0005886">
    <property type="term" value="C:plasma membrane"/>
    <property type="evidence" value="ECO:0000314"/>
    <property type="project" value="UniProtKB"/>
</dbReference>
<dbReference type="GO" id="GO:0140911">
    <property type="term" value="F:pore-forming activity"/>
    <property type="evidence" value="ECO:0000314"/>
    <property type="project" value="CACAO"/>
</dbReference>
<dbReference type="GO" id="GO:0019534">
    <property type="term" value="F:toxin transmembrane transporter activity"/>
    <property type="evidence" value="ECO:0000315"/>
    <property type="project" value="CACAO"/>
</dbReference>
<dbReference type="GO" id="GO:0015031">
    <property type="term" value="P:protein transport"/>
    <property type="evidence" value="ECO:0007669"/>
    <property type="project" value="UniProtKB-KW"/>
</dbReference>
<dbReference type="InterPro" id="IPR006480">
    <property type="entry name" value="Phage_holin_4_1"/>
</dbReference>
<dbReference type="NCBIfam" id="TIGR01593">
    <property type="entry name" value="holin_tox_secr"/>
    <property type="match status" value="1"/>
</dbReference>
<dbReference type="Pfam" id="PF05105">
    <property type="entry name" value="Phage_holin_4_1"/>
    <property type="match status" value="1"/>
</dbReference>
<sequence length="166" mass="18800">MHSSSPFYISNGNKIFFYINLGGVMNMTISFLSEHIFIKLVILTISFDTLLGCLSAIKSRKFNSSFGIDGGIRKVAMIACIFFLSVVDILTKFNFLFMLPQDCINFLRLKHLGISEFFSILFILYESVSILKNMCLCGLPVPKRLKEKIAILLDAMTDEMNAKDEK</sequence>